<comment type="function">
    <text evidence="1">Part of the ABC transporter complex NikABCDE involved in nickel import. Responsible for energy coupling to the transport system.</text>
</comment>
<comment type="catalytic activity">
    <reaction evidence="1">
        <text>Ni(2+)(out) + ATP + H2O = Ni(2+)(in) + ADP + phosphate + H(+)</text>
        <dbReference type="Rhea" id="RHEA:15557"/>
        <dbReference type="ChEBI" id="CHEBI:15377"/>
        <dbReference type="ChEBI" id="CHEBI:15378"/>
        <dbReference type="ChEBI" id="CHEBI:30616"/>
        <dbReference type="ChEBI" id="CHEBI:43474"/>
        <dbReference type="ChEBI" id="CHEBI:49786"/>
        <dbReference type="ChEBI" id="CHEBI:456216"/>
        <dbReference type="EC" id="7.2.2.11"/>
    </reaction>
</comment>
<comment type="subunit">
    <text evidence="1">The complex is composed of two ATP-binding proteins (NikD and NikE), two transmembrane proteins (NikB and NikC) and a solute-binding protein (NikA).</text>
</comment>
<comment type="subcellular location">
    <subcellularLocation>
        <location evidence="1">Cell inner membrane</location>
        <topology evidence="1">Peripheral membrane protein</topology>
    </subcellularLocation>
</comment>
<comment type="similarity">
    <text evidence="1">Belongs to the ABC transporter superfamily. Nickel importer (TC 3.A.1.5.3) family.</text>
</comment>
<reference key="1">
    <citation type="journal article" date="2005" name="J. Bacteriol.">
        <title>Completion of the genome sequence of Brucella abortus and comparison to the highly similar genomes of Brucella melitensis and Brucella suis.</title>
        <authorList>
            <person name="Halling S.M."/>
            <person name="Peterson-Burch B.D."/>
            <person name="Bricker B.J."/>
            <person name="Zuerner R.L."/>
            <person name="Qing Z."/>
            <person name="Li L.-L."/>
            <person name="Kapur V."/>
            <person name="Alt D.P."/>
            <person name="Olsen S.C."/>
        </authorList>
    </citation>
    <scope>NUCLEOTIDE SEQUENCE [LARGE SCALE GENOMIC DNA]</scope>
    <source>
        <strain>9-941</strain>
    </source>
</reference>
<organism>
    <name type="scientific">Brucella abortus biovar 1 (strain 9-941)</name>
    <dbReference type="NCBI Taxonomy" id="262698"/>
    <lineage>
        <taxon>Bacteria</taxon>
        <taxon>Pseudomonadati</taxon>
        <taxon>Pseudomonadota</taxon>
        <taxon>Alphaproteobacteria</taxon>
        <taxon>Hyphomicrobiales</taxon>
        <taxon>Brucellaceae</taxon>
        <taxon>Brucella/Ochrobactrum group</taxon>
        <taxon>Brucella</taxon>
    </lineage>
</organism>
<name>NIKD_BRUAB</name>
<protein>
    <recommendedName>
        <fullName evidence="1">Nickel import ATP-binding protein NikD</fullName>
        <ecNumber evidence="1">7.2.2.11</ecNumber>
    </recommendedName>
</protein>
<proteinExistence type="inferred from homology"/>
<sequence>MTRKTLAIEGLTATTVIDGQQRVLVDNLSLGVQRGRILALVGASGSGKSMTCSAALGVLPPGVTASRGRVTIDGVPYAANALRGRHVATIMQNPRSAFNPVRTMRDHAIETLQALGKLSSNPQDQIVHCMRAAGLEDVKTILSLHPFEMSGGMLQRMMIALALLSEAPFLFADEPTTDLDLVVQLRVLELLEKLVEERDLGILLVTHDMGVVARLAHDVAVLDHGRLIEQAPVMDIFQTPGHEVTRMLVSAHLSLYGMELNA</sequence>
<gene>
    <name evidence="1" type="primary">nikD</name>
    <name type="ordered locus">BruAb2_0431</name>
</gene>
<evidence type="ECO:0000255" key="1">
    <source>
        <dbReference type="HAMAP-Rule" id="MF_01711"/>
    </source>
</evidence>
<accession>Q578S8</accession>
<feature type="chain" id="PRO_0000260201" description="Nickel import ATP-binding protein NikD">
    <location>
        <begin position="1"/>
        <end position="262"/>
    </location>
</feature>
<feature type="domain" description="ABC transporter" evidence="1">
    <location>
        <begin position="6"/>
        <end position="249"/>
    </location>
</feature>
<feature type="binding site" evidence="1">
    <location>
        <begin position="42"/>
        <end position="49"/>
    </location>
    <ligand>
        <name>ATP</name>
        <dbReference type="ChEBI" id="CHEBI:30616"/>
    </ligand>
</feature>
<dbReference type="EC" id="7.2.2.11" evidence="1"/>
<dbReference type="EMBL" id="AE017224">
    <property type="protein sequence ID" value="AAX75856.1"/>
    <property type="molecule type" value="Genomic_DNA"/>
</dbReference>
<dbReference type="RefSeq" id="WP_002965841.1">
    <property type="nucleotide sequence ID" value="NC_006933.1"/>
</dbReference>
<dbReference type="SMR" id="Q578S8"/>
<dbReference type="EnsemblBacteria" id="AAX75856">
    <property type="protein sequence ID" value="AAX75856"/>
    <property type="gene ID" value="BruAb2_0431"/>
</dbReference>
<dbReference type="GeneID" id="97535849"/>
<dbReference type="KEGG" id="bmb:BruAb2_0431"/>
<dbReference type="HOGENOM" id="CLU_000604_1_23_5"/>
<dbReference type="Proteomes" id="UP000000540">
    <property type="component" value="Chromosome II"/>
</dbReference>
<dbReference type="GO" id="GO:0005886">
    <property type="term" value="C:plasma membrane"/>
    <property type="evidence" value="ECO:0007669"/>
    <property type="project" value="UniProtKB-SubCell"/>
</dbReference>
<dbReference type="GO" id="GO:0015413">
    <property type="term" value="F:ABC-type nickel transporter activity"/>
    <property type="evidence" value="ECO:0007669"/>
    <property type="project" value="UniProtKB-EC"/>
</dbReference>
<dbReference type="GO" id="GO:0005524">
    <property type="term" value="F:ATP binding"/>
    <property type="evidence" value="ECO:0007669"/>
    <property type="project" value="UniProtKB-KW"/>
</dbReference>
<dbReference type="GO" id="GO:0016887">
    <property type="term" value="F:ATP hydrolysis activity"/>
    <property type="evidence" value="ECO:0007669"/>
    <property type="project" value="InterPro"/>
</dbReference>
<dbReference type="GO" id="GO:0016151">
    <property type="term" value="F:nickel cation binding"/>
    <property type="evidence" value="ECO:0007669"/>
    <property type="project" value="InterPro"/>
</dbReference>
<dbReference type="Gene3D" id="3.40.50.300">
    <property type="entry name" value="P-loop containing nucleotide triphosphate hydrolases"/>
    <property type="match status" value="1"/>
</dbReference>
<dbReference type="InterPro" id="IPR003593">
    <property type="entry name" value="AAA+_ATPase"/>
</dbReference>
<dbReference type="InterPro" id="IPR050388">
    <property type="entry name" value="ABC_Ni/Peptide_Import"/>
</dbReference>
<dbReference type="InterPro" id="IPR003439">
    <property type="entry name" value="ABC_transporter-like_ATP-bd"/>
</dbReference>
<dbReference type="InterPro" id="IPR017871">
    <property type="entry name" value="ABC_transporter-like_CS"/>
</dbReference>
<dbReference type="InterPro" id="IPR014138">
    <property type="entry name" value="Nickel_NikD"/>
</dbReference>
<dbReference type="InterPro" id="IPR027417">
    <property type="entry name" value="P-loop_NTPase"/>
</dbReference>
<dbReference type="NCBIfam" id="TIGR02770">
    <property type="entry name" value="nickel_nikD"/>
    <property type="match status" value="1"/>
</dbReference>
<dbReference type="PANTHER" id="PTHR43297:SF14">
    <property type="entry name" value="ATPASE AAA-TYPE CORE DOMAIN-CONTAINING PROTEIN"/>
    <property type="match status" value="1"/>
</dbReference>
<dbReference type="PANTHER" id="PTHR43297">
    <property type="entry name" value="OLIGOPEPTIDE TRANSPORT ATP-BINDING PROTEIN APPD"/>
    <property type="match status" value="1"/>
</dbReference>
<dbReference type="Pfam" id="PF00005">
    <property type="entry name" value="ABC_tran"/>
    <property type="match status" value="1"/>
</dbReference>
<dbReference type="SMART" id="SM00382">
    <property type="entry name" value="AAA"/>
    <property type="match status" value="1"/>
</dbReference>
<dbReference type="SUPFAM" id="SSF52540">
    <property type="entry name" value="P-loop containing nucleoside triphosphate hydrolases"/>
    <property type="match status" value="1"/>
</dbReference>
<dbReference type="PROSITE" id="PS00211">
    <property type="entry name" value="ABC_TRANSPORTER_1"/>
    <property type="match status" value="1"/>
</dbReference>
<dbReference type="PROSITE" id="PS50893">
    <property type="entry name" value="ABC_TRANSPORTER_2"/>
    <property type="match status" value="1"/>
</dbReference>
<dbReference type="PROSITE" id="PS51247">
    <property type="entry name" value="NIKD"/>
    <property type="match status" value="1"/>
</dbReference>
<keyword id="KW-0067">ATP-binding</keyword>
<keyword id="KW-0997">Cell inner membrane</keyword>
<keyword id="KW-1003">Cell membrane</keyword>
<keyword id="KW-0406">Ion transport</keyword>
<keyword id="KW-0472">Membrane</keyword>
<keyword id="KW-0533">Nickel</keyword>
<keyword id="KW-0921">Nickel transport</keyword>
<keyword id="KW-0547">Nucleotide-binding</keyword>
<keyword id="KW-1278">Translocase</keyword>
<keyword id="KW-0813">Transport</keyword>